<dbReference type="EC" id="2.7.8.26" evidence="1"/>
<dbReference type="EMBL" id="CP001154">
    <property type="protein sequence ID" value="ACO76194.1"/>
    <property type="molecule type" value="Genomic_DNA"/>
</dbReference>
<dbReference type="RefSeq" id="WP_012698657.1">
    <property type="nucleotide sequence ID" value="NC_012559.1"/>
</dbReference>
<dbReference type="STRING" id="557598.LHK_03216"/>
<dbReference type="KEGG" id="lhk:LHK_03216"/>
<dbReference type="eggNOG" id="COG0368">
    <property type="taxonomic scope" value="Bacteria"/>
</dbReference>
<dbReference type="HOGENOM" id="CLU_057426_3_1_4"/>
<dbReference type="UniPathway" id="UPA00148">
    <property type="reaction ID" value="UER00238"/>
</dbReference>
<dbReference type="Proteomes" id="UP000002010">
    <property type="component" value="Chromosome"/>
</dbReference>
<dbReference type="GO" id="GO:0005886">
    <property type="term" value="C:plasma membrane"/>
    <property type="evidence" value="ECO:0007669"/>
    <property type="project" value="UniProtKB-SubCell"/>
</dbReference>
<dbReference type="GO" id="GO:0051073">
    <property type="term" value="F:adenosylcobinamide-GDP ribazoletransferase activity"/>
    <property type="evidence" value="ECO:0007669"/>
    <property type="project" value="UniProtKB-UniRule"/>
</dbReference>
<dbReference type="GO" id="GO:0008818">
    <property type="term" value="F:cobalamin 5'-phosphate synthase activity"/>
    <property type="evidence" value="ECO:0007669"/>
    <property type="project" value="UniProtKB-UniRule"/>
</dbReference>
<dbReference type="GO" id="GO:0009236">
    <property type="term" value="P:cobalamin biosynthetic process"/>
    <property type="evidence" value="ECO:0007669"/>
    <property type="project" value="UniProtKB-UniRule"/>
</dbReference>
<dbReference type="HAMAP" id="MF_00719">
    <property type="entry name" value="CobS"/>
    <property type="match status" value="1"/>
</dbReference>
<dbReference type="InterPro" id="IPR003805">
    <property type="entry name" value="CobS"/>
</dbReference>
<dbReference type="PANTHER" id="PTHR34148">
    <property type="entry name" value="ADENOSYLCOBINAMIDE-GDP RIBAZOLETRANSFERASE"/>
    <property type="match status" value="1"/>
</dbReference>
<dbReference type="PANTHER" id="PTHR34148:SF1">
    <property type="entry name" value="ADENOSYLCOBINAMIDE-GDP RIBAZOLETRANSFERASE"/>
    <property type="match status" value="1"/>
</dbReference>
<dbReference type="Pfam" id="PF02654">
    <property type="entry name" value="CobS"/>
    <property type="match status" value="1"/>
</dbReference>
<reference key="1">
    <citation type="journal article" date="2009" name="PLoS Genet.">
        <title>The complete genome and proteome of Laribacter hongkongensis reveal potential mechanisms for adaptations to different temperatures and habitats.</title>
        <authorList>
            <person name="Woo P.C.Y."/>
            <person name="Lau S.K.P."/>
            <person name="Tse H."/>
            <person name="Teng J.L.L."/>
            <person name="Curreem S.O."/>
            <person name="Tsang A.K.L."/>
            <person name="Fan R.Y.Y."/>
            <person name="Wong G.K.M."/>
            <person name="Huang Y."/>
            <person name="Loman N.J."/>
            <person name="Snyder L.A.S."/>
            <person name="Cai J.J."/>
            <person name="Huang J.-D."/>
            <person name="Mak W."/>
            <person name="Pallen M.J."/>
            <person name="Lok S."/>
            <person name="Yuen K.-Y."/>
        </authorList>
    </citation>
    <scope>NUCLEOTIDE SEQUENCE [LARGE SCALE GENOMIC DNA]</scope>
    <source>
        <strain>HLHK9</strain>
    </source>
</reference>
<sequence>MRSLILAVQFLTRLPTPQLRTFDPAWLAGAIRWFAVVGLLVGALVAALGWLGAWLDPWLAALLMLVTWVWVTGGLHLDGLGDLADGLGAAHRSPERFLAVLKDPHTGSFAVITLALQLLAKLVLLMLAVRHGVGWSALVLLPAWARLGAVWWTTLPPLSAGGHAERFAWRHDWPAFWLSWLLLAALSAWLAPVLLLAPVLWWGWRRFLWRRLGGMSGDCLGAGIELTETGLLLLAVVATRLPLA</sequence>
<name>COBS_LARHH</name>
<organism>
    <name type="scientific">Laribacter hongkongensis (strain HLHK9)</name>
    <dbReference type="NCBI Taxonomy" id="557598"/>
    <lineage>
        <taxon>Bacteria</taxon>
        <taxon>Pseudomonadati</taxon>
        <taxon>Pseudomonadota</taxon>
        <taxon>Betaproteobacteria</taxon>
        <taxon>Neisseriales</taxon>
        <taxon>Aquaspirillaceae</taxon>
        <taxon>Laribacter</taxon>
    </lineage>
</organism>
<protein>
    <recommendedName>
        <fullName evidence="1">Adenosylcobinamide-GDP ribazoletransferase</fullName>
        <ecNumber evidence="1">2.7.8.26</ecNumber>
    </recommendedName>
    <alternativeName>
        <fullName evidence="1">Cobalamin synthase</fullName>
    </alternativeName>
    <alternativeName>
        <fullName evidence="1">Cobalamin-5'-phosphate synthase</fullName>
    </alternativeName>
</protein>
<comment type="function">
    <text evidence="1">Joins adenosylcobinamide-GDP and alpha-ribazole to generate adenosylcobalamin (Ado-cobalamin). Also synthesizes adenosylcobalamin 5'-phosphate from adenosylcobinamide-GDP and alpha-ribazole 5'-phosphate.</text>
</comment>
<comment type="catalytic activity">
    <reaction evidence="1">
        <text>alpha-ribazole + adenosylcob(III)inamide-GDP = adenosylcob(III)alamin + GMP + H(+)</text>
        <dbReference type="Rhea" id="RHEA:16049"/>
        <dbReference type="ChEBI" id="CHEBI:10329"/>
        <dbReference type="ChEBI" id="CHEBI:15378"/>
        <dbReference type="ChEBI" id="CHEBI:18408"/>
        <dbReference type="ChEBI" id="CHEBI:58115"/>
        <dbReference type="ChEBI" id="CHEBI:60487"/>
        <dbReference type="EC" id="2.7.8.26"/>
    </reaction>
</comment>
<comment type="catalytic activity">
    <reaction evidence="1">
        <text>alpha-ribazole 5'-phosphate + adenosylcob(III)inamide-GDP = adenosylcob(III)alamin 5'-phosphate + GMP + H(+)</text>
        <dbReference type="Rhea" id="RHEA:23560"/>
        <dbReference type="ChEBI" id="CHEBI:15378"/>
        <dbReference type="ChEBI" id="CHEBI:57918"/>
        <dbReference type="ChEBI" id="CHEBI:58115"/>
        <dbReference type="ChEBI" id="CHEBI:60487"/>
        <dbReference type="ChEBI" id="CHEBI:60493"/>
        <dbReference type="EC" id="2.7.8.26"/>
    </reaction>
</comment>
<comment type="cofactor">
    <cofactor evidence="1">
        <name>Mg(2+)</name>
        <dbReference type="ChEBI" id="CHEBI:18420"/>
    </cofactor>
</comment>
<comment type="pathway">
    <text evidence="1">Cofactor biosynthesis; adenosylcobalamin biosynthesis; adenosylcobalamin from cob(II)yrinate a,c-diamide: step 7/7.</text>
</comment>
<comment type="subcellular location">
    <subcellularLocation>
        <location evidence="1">Cell inner membrane</location>
        <topology evidence="1">Multi-pass membrane protein</topology>
    </subcellularLocation>
</comment>
<comment type="similarity">
    <text evidence="1">Belongs to the CobS family.</text>
</comment>
<accession>C1D6F9</accession>
<gene>
    <name evidence="1" type="primary">cobS</name>
    <name type="ordered locus">LHK_03216</name>
</gene>
<keyword id="KW-0997">Cell inner membrane</keyword>
<keyword id="KW-1003">Cell membrane</keyword>
<keyword id="KW-0169">Cobalamin biosynthesis</keyword>
<keyword id="KW-0460">Magnesium</keyword>
<keyword id="KW-0472">Membrane</keyword>
<keyword id="KW-1185">Reference proteome</keyword>
<keyword id="KW-0808">Transferase</keyword>
<keyword id="KW-0812">Transmembrane</keyword>
<keyword id="KW-1133">Transmembrane helix</keyword>
<feature type="chain" id="PRO_1000148027" description="Adenosylcobinamide-GDP ribazoletransferase">
    <location>
        <begin position="1"/>
        <end position="244"/>
    </location>
</feature>
<feature type="transmembrane region" description="Helical" evidence="1">
    <location>
        <begin position="33"/>
        <end position="53"/>
    </location>
</feature>
<feature type="transmembrane region" description="Helical" evidence="1">
    <location>
        <begin position="57"/>
        <end position="77"/>
    </location>
</feature>
<feature type="transmembrane region" description="Helical" evidence="1">
    <location>
        <begin position="109"/>
        <end position="129"/>
    </location>
</feature>
<feature type="transmembrane region" description="Helical" evidence="1">
    <location>
        <begin position="132"/>
        <end position="152"/>
    </location>
</feature>
<feature type="transmembrane region" description="Helical" evidence="1">
    <location>
        <begin position="176"/>
        <end position="196"/>
    </location>
</feature>
<proteinExistence type="inferred from homology"/>
<evidence type="ECO:0000255" key="1">
    <source>
        <dbReference type="HAMAP-Rule" id="MF_00719"/>
    </source>
</evidence>